<sequence>MKVMASVKRICRNCKIIKRKGVVRVICSSDPRHKQRQG</sequence>
<keyword id="KW-1185">Reference proteome</keyword>
<keyword id="KW-0687">Ribonucleoprotein</keyword>
<keyword id="KW-0689">Ribosomal protein</keyword>
<dbReference type="EMBL" id="CP000270">
    <property type="protein sequence ID" value="ABE32597.1"/>
    <property type="molecule type" value="Genomic_DNA"/>
</dbReference>
<dbReference type="RefSeq" id="WP_004199844.1">
    <property type="nucleotide sequence ID" value="NZ_CP008760.1"/>
</dbReference>
<dbReference type="SMR" id="Q13TJ2"/>
<dbReference type="STRING" id="266265.Bxe_A0336"/>
<dbReference type="GeneID" id="98107138"/>
<dbReference type="KEGG" id="bxb:DR64_2506"/>
<dbReference type="KEGG" id="bxe:Bxe_A0336"/>
<dbReference type="eggNOG" id="COG0257">
    <property type="taxonomic scope" value="Bacteria"/>
</dbReference>
<dbReference type="OrthoDB" id="9802520at2"/>
<dbReference type="Proteomes" id="UP000001817">
    <property type="component" value="Chromosome 1"/>
</dbReference>
<dbReference type="GO" id="GO:0005737">
    <property type="term" value="C:cytoplasm"/>
    <property type="evidence" value="ECO:0007669"/>
    <property type="project" value="UniProtKB-ARBA"/>
</dbReference>
<dbReference type="GO" id="GO:1990904">
    <property type="term" value="C:ribonucleoprotein complex"/>
    <property type="evidence" value="ECO:0007669"/>
    <property type="project" value="UniProtKB-KW"/>
</dbReference>
<dbReference type="GO" id="GO:0005840">
    <property type="term" value="C:ribosome"/>
    <property type="evidence" value="ECO:0007669"/>
    <property type="project" value="UniProtKB-KW"/>
</dbReference>
<dbReference type="GO" id="GO:0003735">
    <property type="term" value="F:structural constituent of ribosome"/>
    <property type="evidence" value="ECO:0007669"/>
    <property type="project" value="InterPro"/>
</dbReference>
<dbReference type="GO" id="GO:0006412">
    <property type="term" value="P:translation"/>
    <property type="evidence" value="ECO:0007669"/>
    <property type="project" value="UniProtKB-UniRule"/>
</dbReference>
<dbReference type="HAMAP" id="MF_00251">
    <property type="entry name" value="Ribosomal_bL36"/>
    <property type="match status" value="1"/>
</dbReference>
<dbReference type="InterPro" id="IPR000473">
    <property type="entry name" value="Ribosomal_bL36"/>
</dbReference>
<dbReference type="InterPro" id="IPR035977">
    <property type="entry name" value="Ribosomal_bL36_sp"/>
</dbReference>
<dbReference type="NCBIfam" id="TIGR01022">
    <property type="entry name" value="rpmJ_bact"/>
    <property type="match status" value="1"/>
</dbReference>
<dbReference type="PANTHER" id="PTHR42888">
    <property type="entry name" value="50S RIBOSOMAL PROTEIN L36, CHLOROPLASTIC"/>
    <property type="match status" value="1"/>
</dbReference>
<dbReference type="PANTHER" id="PTHR42888:SF1">
    <property type="entry name" value="LARGE RIBOSOMAL SUBUNIT PROTEIN BL36C"/>
    <property type="match status" value="1"/>
</dbReference>
<dbReference type="Pfam" id="PF00444">
    <property type="entry name" value="Ribosomal_L36"/>
    <property type="match status" value="1"/>
</dbReference>
<dbReference type="SUPFAM" id="SSF57840">
    <property type="entry name" value="Ribosomal protein L36"/>
    <property type="match status" value="1"/>
</dbReference>
<dbReference type="PROSITE" id="PS00828">
    <property type="entry name" value="RIBOSOMAL_L36"/>
    <property type="match status" value="1"/>
</dbReference>
<feature type="chain" id="PRO_0000302174" description="Large ribosomal subunit protein bL36">
    <location>
        <begin position="1"/>
        <end position="38"/>
    </location>
</feature>
<evidence type="ECO:0000255" key="1">
    <source>
        <dbReference type="HAMAP-Rule" id="MF_00251"/>
    </source>
</evidence>
<evidence type="ECO:0000305" key="2"/>
<name>RL36_PARXL</name>
<proteinExistence type="inferred from homology"/>
<comment type="similarity">
    <text evidence="1">Belongs to the bacterial ribosomal protein bL36 family.</text>
</comment>
<protein>
    <recommendedName>
        <fullName evidence="1">Large ribosomal subunit protein bL36</fullName>
    </recommendedName>
    <alternativeName>
        <fullName evidence="2">50S ribosomal protein L36</fullName>
    </alternativeName>
</protein>
<reference key="1">
    <citation type="journal article" date="2006" name="Proc. Natl. Acad. Sci. U.S.A.">
        <title>Burkholderia xenovorans LB400 harbors a multi-replicon, 9.73-Mbp genome shaped for versatility.</title>
        <authorList>
            <person name="Chain P.S.G."/>
            <person name="Denef V.J."/>
            <person name="Konstantinidis K.T."/>
            <person name="Vergez L.M."/>
            <person name="Agullo L."/>
            <person name="Reyes V.L."/>
            <person name="Hauser L."/>
            <person name="Cordova M."/>
            <person name="Gomez L."/>
            <person name="Gonzalez M."/>
            <person name="Land M."/>
            <person name="Lao V."/>
            <person name="Larimer F."/>
            <person name="LiPuma J.J."/>
            <person name="Mahenthiralingam E."/>
            <person name="Malfatti S.A."/>
            <person name="Marx C.J."/>
            <person name="Parnell J.J."/>
            <person name="Ramette A."/>
            <person name="Richardson P."/>
            <person name="Seeger M."/>
            <person name="Smith D."/>
            <person name="Spilker T."/>
            <person name="Sul W.J."/>
            <person name="Tsoi T.V."/>
            <person name="Ulrich L.E."/>
            <person name="Zhulin I.B."/>
            <person name="Tiedje J.M."/>
        </authorList>
    </citation>
    <scope>NUCLEOTIDE SEQUENCE [LARGE SCALE GENOMIC DNA]</scope>
    <source>
        <strain>LB400</strain>
    </source>
</reference>
<gene>
    <name evidence="1" type="primary">rpmJ</name>
    <name type="ordered locus">Bxeno_A4059</name>
    <name type="ORF">Bxe_A0336</name>
</gene>
<organism>
    <name type="scientific">Paraburkholderia xenovorans (strain LB400)</name>
    <dbReference type="NCBI Taxonomy" id="266265"/>
    <lineage>
        <taxon>Bacteria</taxon>
        <taxon>Pseudomonadati</taxon>
        <taxon>Pseudomonadota</taxon>
        <taxon>Betaproteobacteria</taxon>
        <taxon>Burkholderiales</taxon>
        <taxon>Burkholderiaceae</taxon>
        <taxon>Paraburkholderia</taxon>
    </lineage>
</organism>
<accession>Q13TJ2</accession>